<proteinExistence type="inferred from homology"/>
<dbReference type="EC" id="1.15.1.1" evidence="2"/>
<dbReference type="EMBL" id="BX571857">
    <property type="protein sequence ID" value="CAG43292.1"/>
    <property type="molecule type" value="Genomic_DNA"/>
</dbReference>
<dbReference type="RefSeq" id="WP_000863556.1">
    <property type="nucleotide sequence ID" value="NC_002953.3"/>
</dbReference>
<dbReference type="SMR" id="Q6G913"/>
<dbReference type="KEGG" id="sas:SAS1491"/>
<dbReference type="HOGENOM" id="CLU_031625_0_1_9"/>
<dbReference type="GO" id="GO:0005737">
    <property type="term" value="C:cytoplasm"/>
    <property type="evidence" value="ECO:0007669"/>
    <property type="project" value="TreeGrafter"/>
</dbReference>
<dbReference type="GO" id="GO:0046872">
    <property type="term" value="F:metal ion binding"/>
    <property type="evidence" value="ECO:0007669"/>
    <property type="project" value="UniProtKB-KW"/>
</dbReference>
<dbReference type="GO" id="GO:0004784">
    <property type="term" value="F:superoxide dismutase activity"/>
    <property type="evidence" value="ECO:0007669"/>
    <property type="project" value="UniProtKB-EC"/>
</dbReference>
<dbReference type="FunFam" id="1.10.287.990:FF:000001">
    <property type="entry name" value="Superoxide dismutase"/>
    <property type="match status" value="1"/>
</dbReference>
<dbReference type="FunFam" id="3.55.40.20:FF:000001">
    <property type="entry name" value="Superoxide dismutase"/>
    <property type="match status" value="1"/>
</dbReference>
<dbReference type="Gene3D" id="1.10.287.990">
    <property type="entry name" value="Fe,Mn superoxide dismutase (SOD) domain"/>
    <property type="match status" value="1"/>
</dbReference>
<dbReference type="Gene3D" id="3.55.40.20">
    <property type="entry name" value="Iron/manganese superoxide dismutase, C-terminal domain"/>
    <property type="match status" value="1"/>
</dbReference>
<dbReference type="InterPro" id="IPR001189">
    <property type="entry name" value="Mn/Fe_SOD"/>
</dbReference>
<dbReference type="InterPro" id="IPR019833">
    <property type="entry name" value="Mn/Fe_SOD_BS"/>
</dbReference>
<dbReference type="InterPro" id="IPR019832">
    <property type="entry name" value="Mn/Fe_SOD_C"/>
</dbReference>
<dbReference type="InterPro" id="IPR019831">
    <property type="entry name" value="Mn/Fe_SOD_N"/>
</dbReference>
<dbReference type="InterPro" id="IPR036324">
    <property type="entry name" value="Mn/Fe_SOD_N_sf"/>
</dbReference>
<dbReference type="InterPro" id="IPR036314">
    <property type="entry name" value="SOD_C_sf"/>
</dbReference>
<dbReference type="PANTHER" id="PTHR43595">
    <property type="entry name" value="37S RIBOSOMAL PROTEIN S26, MITOCHONDRIAL"/>
    <property type="match status" value="1"/>
</dbReference>
<dbReference type="PANTHER" id="PTHR43595:SF2">
    <property type="entry name" value="SMALL RIBOSOMAL SUBUNIT PROTEIN MS42"/>
    <property type="match status" value="1"/>
</dbReference>
<dbReference type="Pfam" id="PF02777">
    <property type="entry name" value="Sod_Fe_C"/>
    <property type="match status" value="1"/>
</dbReference>
<dbReference type="Pfam" id="PF00081">
    <property type="entry name" value="Sod_Fe_N"/>
    <property type="match status" value="1"/>
</dbReference>
<dbReference type="PIRSF" id="PIRSF000349">
    <property type="entry name" value="SODismutase"/>
    <property type="match status" value="1"/>
</dbReference>
<dbReference type="PRINTS" id="PR01703">
    <property type="entry name" value="MNSODISMTASE"/>
</dbReference>
<dbReference type="SUPFAM" id="SSF54719">
    <property type="entry name" value="Fe,Mn superoxide dismutase (SOD), C-terminal domain"/>
    <property type="match status" value="1"/>
</dbReference>
<dbReference type="SUPFAM" id="SSF46609">
    <property type="entry name" value="Fe,Mn superoxide dismutase (SOD), N-terminal domain"/>
    <property type="match status" value="1"/>
</dbReference>
<dbReference type="PROSITE" id="PS00088">
    <property type="entry name" value="SOD_MN"/>
    <property type="match status" value="1"/>
</dbReference>
<feature type="chain" id="PRO_0000160073" description="Superoxide dismutase [Mn/Fe] 1">
    <location>
        <begin position="1"/>
        <end position="199"/>
    </location>
</feature>
<feature type="binding site" evidence="2">
    <location>
        <position position="27"/>
    </location>
    <ligand>
        <name>Fe(3+)</name>
        <dbReference type="ChEBI" id="CHEBI:29034"/>
    </ligand>
</feature>
<feature type="binding site" evidence="2">
    <location>
        <position position="27"/>
    </location>
    <ligand>
        <name>Mn(2+)</name>
        <dbReference type="ChEBI" id="CHEBI:29035"/>
    </ligand>
</feature>
<feature type="binding site" evidence="2">
    <location>
        <position position="81"/>
    </location>
    <ligand>
        <name>Fe(3+)</name>
        <dbReference type="ChEBI" id="CHEBI:29034"/>
    </ligand>
</feature>
<feature type="binding site" evidence="2">
    <location>
        <position position="81"/>
    </location>
    <ligand>
        <name>Mn(2+)</name>
        <dbReference type="ChEBI" id="CHEBI:29035"/>
    </ligand>
</feature>
<feature type="binding site" evidence="2">
    <location>
        <position position="161"/>
    </location>
    <ligand>
        <name>Fe(3+)</name>
        <dbReference type="ChEBI" id="CHEBI:29034"/>
    </ligand>
</feature>
<feature type="binding site" evidence="2">
    <location>
        <position position="161"/>
    </location>
    <ligand>
        <name>Mn(2+)</name>
        <dbReference type="ChEBI" id="CHEBI:29035"/>
    </ligand>
</feature>
<feature type="binding site" evidence="2">
    <location>
        <position position="165"/>
    </location>
    <ligand>
        <name>Fe(3+)</name>
        <dbReference type="ChEBI" id="CHEBI:29034"/>
    </ligand>
</feature>
<feature type="binding site" evidence="2">
    <location>
        <position position="165"/>
    </location>
    <ligand>
        <name>Mn(2+)</name>
        <dbReference type="ChEBI" id="CHEBI:29035"/>
    </ligand>
</feature>
<organism>
    <name type="scientific">Staphylococcus aureus (strain MSSA476)</name>
    <dbReference type="NCBI Taxonomy" id="282459"/>
    <lineage>
        <taxon>Bacteria</taxon>
        <taxon>Bacillati</taxon>
        <taxon>Bacillota</taxon>
        <taxon>Bacilli</taxon>
        <taxon>Bacillales</taxon>
        <taxon>Staphylococcaceae</taxon>
        <taxon>Staphylococcus</taxon>
    </lineage>
</organism>
<protein>
    <recommendedName>
        <fullName>Superoxide dismutase [Mn/Fe] 1</fullName>
        <ecNumber evidence="2">1.15.1.1</ecNumber>
    </recommendedName>
</protein>
<gene>
    <name type="primary">sodA</name>
    <name type="ordered locus">SAS1491</name>
</gene>
<accession>Q6G913</accession>
<sequence>MAFELPKLPYAFDALEPHFDKETMEIHHDRHHNTYVTKLNAAVEGTDLESKSIEEIVANLDSVPANIQTAVRNNGGGHLNHSLFWELLSPNSEEKGTVVEKIKEQWGSLEEFKKEFADKAAARFGSGWAWLVVNNGQLEIVTTPNQDNPLTEGKTPILGLDVWEHAYYLKYQNKRPDYIGAFWNVVNWEKVDELYNATK</sequence>
<comment type="function">
    <text evidence="2">Destroys superoxide anion radicals which are normally produced within the cells and which are toxic to biological systems. Catalyzes the dismutation of superoxide anion radicals into O2 and H2O2 by successive reduction and oxidation of the transition metal ion at the active site.</text>
</comment>
<comment type="catalytic activity">
    <reaction evidence="2">
        <text>2 superoxide + 2 H(+) = H2O2 + O2</text>
        <dbReference type="Rhea" id="RHEA:20696"/>
        <dbReference type="ChEBI" id="CHEBI:15378"/>
        <dbReference type="ChEBI" id="CHEBI:15379"/>
        <dbReference type="ChEBI" id="CHEBI:16240"/>
        <dbReference type="ChEBI" id="CHEBI:18421"/>
        <dbReference type="EC" id="1.15.1.1"/>
    </reaction>
    <physiologicalReaction direction="left-to-right" evidence="2">
        <dbReference type="Rhea" id="RHEA:20697"/>
    </physiologicalReaction>
</comment>
<comment type="cofactor">
    <cofactor evidence="2">
        <name>Mn(2+)</name>
        <dbReference type="ChEBI" id="CHEBI:29035"/>
    </cofactor>
    <cofactor evidence="2">
        <name>Fe(3+)</name>
        <dbReference type="ChEBI" id="CHEBI:29034"/>
    </cofactor>
    <text evidence="2">Binds 1 Mn(2+) or Fe(3+) ion per subunit.</text>
</comment>
<comment type="subunit">
    <text evidence="1">Homodimer. Can also form a heterodimer with SodM (By similarity).</text>
</comment>
<comment type="similarity">
    <text evidence="3">Belongs to the iron/manganese superoxide dismutase family.</text>
</comment>
<evidence type="ECO:0000250" key="1"/>
<evidence type="ECO:0000250" key="2">
    <source>
        <dbReference type="UniProtKB" id="P80293"/>
    </source>
</evidence>
<evidence type="ECO:0000305" key="3"/>
<reference key="1">
    <citation type="journal article" date="2004" name="Proc. Natl. Acad. Sci. U.S.A.">
        <title>Complete genomes of two clinical Staphylococcus aureus strains: evidence for the rapid evolution of virulence and drug resistance.</title>
        <authorList>
            <person name="Holden M.T.G."/>
            <person name="Feil E.J."/>
            <person name="Lindsay J.A."/>
            <person name="Peacock S.J."/>
            <person name="Day N.P.J."/>
            <person name="Enright M.C."/>
            <person name="Foster T.J."/>
            <person name="Moore C.E."/>
            <person name="Hurst L."/>
            <person name="Atkin R."/>
            <person name="Barron A."/>
            <person name="Bason N."/>
            <person name="Bentley S.D."/>
            <person name="Chillingworth C."/>
            <person name="Chillingworth T."/>
            <person name="Churcher C."/>
            <person name="Clark L."/>
            <person name="Corton C."/>
            <person name="Cronin A."/>
            <person name="Doggett J."/>
            <person name="Dowd L."/>
            <person name="Feltwell T."/>
            <person name="Hance Z."/>
            <person name="Harris B."/>
            <person name="Hauser H."/>
            <person name="Holroyd S."/>
            <person name="Jagels K."/>
            <person name="James K.D."/>
            <person name="Lennard N."/>
            <person name="Line A."/>
            <person name="Mayes R."/>
            <person name="Moule S."/>
            <person name="Mungall K."/>
            <person name="Ormond D."/>
            <person name="Quail M.A."/>
            <person name="Rabbinowitsch E."/>
            <person name="Rutherford K.M."/>
            <person name="Sanders M."/>
            <person name="Sharp S."/>
            <person name="Simmonds M."/>
            <person name="Stevens K."/>
            <person name="Whitehead S."/>
            <person name="Barrell B.G."/>
            <person name="Spratt B.G."/>
            <person name="Parkhill J."/>
        </authorList>
    </citation>
    <scope>NUCLEOTIDE SEQUENCE [LARGE SCALE GENOMIC DNA]</scope>
    <source>
        <strain>MSSA476</strain>
    </source>
</reference>
<keyword id="KW-0408">Iron</keyword>
<keyword id="KW-0464">Manganese</keyword>
<keyword id="KW-0479">Metal-binding</keyword>
<keyword id="KW-0560">Oxidoreductase</keyword>
<keyword id="KW-0346">Stress response</keyword>
<name>SODM1_STAAS</name>